<sequence>MATTHLDVCAVVPAAGFGRRMQTECPKQYLSIGNQTILEHSVHALLAHPRVKRVVIAISPGDSRFAQLPLANHPQITVVDGGDERADSVLAGLKAAGDAQWVLVHDAARPCLHQDDLARLLALSETSRTGGILAAPVRDTMKRAEPGKNAIAHTVDRNGLWHALTPQFFPRELLHDCLTRALNEGATITDEASALEYCGFHPQLVEGRADNIKVTRPEDLALAEFYLTRTIHQENT</sequence>
<organism>
    <name type="scientific">Shigella dysenteriae serotype 1 (strain Sd197)</name>
    <dbReference type="NCBI Taxonomy" id="300267"/>
    <lineage>
        <taxon>Bacteria</taxon>
        <taxon>Pseudomonadati</taxon>
        <taxon>Pseudomonadota</taxon>
        <taxon>Gammaproteobacteria</taxon>
        <taxon>Enterobacterales</taxon>
        <taxon>Enterobacteriaceae</taxon>
        <taxon>Shigella</taxon>
    </lineage>
</organism>
<keyword id="KW-0414">Isoprene biosynthesis</keyword>
<keyword id="KW-0548">Nucleotidyltransferase</keyword>
<keyword id="KW-1185">Reference proteome</keyword>
<keyword id="KW-0808">Transferase</keyword>
<reference key="1">
    <citation type="journal article" date="2005" name="Nucleic Acids Res.">
        <title>Genome dynamics and diversity of Shigella species, the etiologic agents of bacillary dysentery.</title>
        <authorList>
            <person name="Yang F."/>
            <person name="Yang J."/>
            <person name="Zhang X."/>
            <person name="Chen L."/>
            <person name="Jiang Y."/>
            <person name="Yan Y."/>
            <person name="Tang X."/>
            <person name="Wang J."/>
            <person name="Xiong Z."/>
            <person name="Dong J."/>
            <person name="Xue Y."/>
            <person name="Zhu Y."/>
            <person name="Xu X."/>
            <person name="Sun L."/>
            <person name="Chen S."/>
            <person name="Nie H."/>
            <person name="Peng J."/>
            <person name="Xu J."/>
            <person name="Wang Y."/>
            <person name="Yuan Z."/>
            <person name="Wen Y."/>
            <person name="Yao Z."/>
            <person name="Shen Y."/>
            <person name="Qiang B."/>
            <person name="Hou Y."/>
            <person name="Yu J."/>
            <person name="Jin Q."/>
        </authorList>
    </citation>
    <scope>NUCLEOTIDE SEQUENCE [LARGE SCALE GENOMIC DNA]</scope>
    <source>
        <strain>Sd197</strain>
    </source>
</reference>
<comment type="function">
    <text evidence="1">Catalyzes the formation of 4-diphosphocytidyl-2-C-methyl-D-erythritol from CTP and 2-C-methyl-D-erythritol 4-phosphate (MEP).</text>
</comment>
<comment type="catalytic activity">
    <reaction evidence="1">
        <text>2-C-methyl-D-erythritol 4-phosphate + CTP + H(+) = 4-CDP-2-C-methyl-D-erythritol + diphosphate</text>
        <dbReference type="Rhea" id="RHEA:13429"/>
        <dbReference type="ChEBI" id="CHEBI:15378"/>
        <dbReference type="ChEBI" id="CHEBI:33019"/>
        <dbReference type="ChEBI" id="CHEBI:37563"/>
        <dbReference type="ChEBI" id="CHEBI:57823"/>
        <dbReference type="ChEBI" id="CHEBI:58262"/>
        <dbReference type="EC" id="2.7.7.60"/>
    </reaction>
</comment>
<comment type="pathway">
    <text evidence="1">Isoprenoid biosynthesis; isopentenyl diphosphate biosynthesis via DXP pathway; isopentenyl diphosphate from 1-deoxy-D-xylulose 5-phosphate: step 2/6.</text>
</comment>
<comment type="subunit">
    <text evidence="1">Homodimer.</text>
</comment>
<comment type="similarity">
    <text evidence="1">Belongs to the IspD/TarI cytidylyltransferase family. IspD subfamily.</text>
</comment>
<proteinExistence type="inferred from homology"/>
<protein>
    <recommendedName>
        <fullName evidence="1">2-C-methyl-D-erythritol 4-phosphate cytidylyltransferase</fullName>
        <ecNumber evidence="1">2.7.7.60</ecNumber>
    </recommendedName>
    <alternativeName>
        <fullName evidence="1">4-diphosphocytidyl-2C-methyl-D-erythritol synthase</fullName>
    </alternativeName>
    <alternativeName>
        <fullName evidence="1">MEP cytidylyltransferase</fullName>
        <shortName evidence="1">MCT</shortName>
    </alternativeName>
</protein>
<evidence type="ECO:0000255" key="1">
    <source>
        <dbReference type="HAMAP-Rule" id="MF_00108"/>
    </source>
</evidence>
<accession>Q32CI3</accession>
<feature type="chain" id="PRO_0000237820" description="2-C-methyl-D-erythritol 4-phosphate cytidylyltransferase">
    <location>
        <begin position="1"/>
        <end position="236"/>
    </location>
</feature>
<feature type="site" description="Transition state stabilizer" evidence="1">
    <location>
        <position position="20"/>
    </location>
</feature>
<feature type="site" description="Transition state stabilizer" evidence="1">
    <location>
        <position position="27"/>
    </location>
</feature>
<feature type="site" description="Positions MEP for the nucleophilic attack" evidence="1">
    <location>
        <position position="157"/>
    </location>
</feature>
<feature type="site" description="Positions MEP for the nucleophilic attack" evidence="1">
    <location>
        <position position="213"/>
    </location>
</feature>
<gene>
    <name evidence="1" type="primary">ispD</name>
    <name type="ordered locus">SDY_2946</name>
</gene>
<dbReference type="EC" id="2.7.7.60" evidence="1"/>
<dbReference type="EMBL" id="CP000034">
    <property type="protein sequence ID" value="ABB62972.1"/>
    <property type="molecule type" value="Genomic_DNA"/>
</dbReference>
<dbReference type="RefSeq" id="WP_000246138.1">
    <property type="nucleotide sequence ID" value="NC_007606.1"/>
</dbReference>
<dbReference type="RefSeq" id="YP_404463.1">
    <property type="nucleotide sequence ID" value="NC_007606.1"/>
</dbReference>
<dbReference type="SMR" id="Q32CI3"/>
<dbReference type="STRING" id="300267.SDY_2946"/>
<dbReference type="EnsemblBacteria" id="ABB62972">
    <property type="protein sequence ID" value="ABB62972"/>
    <property type="gene ID" value="SDY_2946"/>
</dbReference>
<dbReference type="GeneID" id="93779259"/>
<dbReference type="KEGG" id="sdy:SDY_2946"/>
<dbReference type="PATRIC" id="fig|300267.13.peg.3538"/>
<dbReference type="HOGENOM" id="CLU_061281_3_1_6"/>
<dbReference type="UniPathway" id="UPA00056">
    <property type="reaction ID" value="UER00093"/>
</dbReference>
<dbReference type="Proteomes" id="UP000002716">
    <property type="component" value="Chromosome"/>
</dbReference>
<dbReference type="GO" id="GO:0050518">
    <property type="term" value="F:2-C-methyl-D-erythritol 4-phosphate cytidylyltransferase activity"/>
    <property type="evidence" value="ECO:0007669"/>
    <property type="project" value="UniProtKB-UniRule"/>
</dbReference>
<dbReference type="GO" id="GO:0019288">
    <property type="term" value="P:isopentenyl diphosphate biosynthetic process, methylerythritol 4-phosphate pathway"/>
    <property type="evidence" value="ECO:0007669"/>
    <property type="project" value="UniProtKB-UniRule"/>
</dbReference>
<dbReference type="CDD" id="cd02516">
    <property type="entry name" value="CDP-ME_synthetase"/>
    <property type="match status" value="1"/>
</dbReference>
<dbReference type="FunFam" id="3.90.550.10:FF:000003">
    <property type="entry name" value="2-C-methyl-D-erythritol 4-phosphate cytidylyltransferase"/>
    <property type="match status" value="1"/>
</dbReference>
<dbReference type="Gene3D" id="3.90.550.10">
    <property type="entry name" value="Spore Coat Polysaccharide Biosynthesis Protein SpsA, Chain A"/>
    <property type="match status" value="1"/>
</dbReference>
<dbReference type="HAMAP" id="MF_00108">
    <property type="entry name" value="IspD"/>
    <property type="match status" value="1"/>
</dbReference>
<dbReference type="InterPro" id="IPR001228">
    <property type="entry name" value="IspD"/>
</dbReference>
<dbReference type="InterPro" id="IPR034683">
    <property type="entry name" value="IspD/TarI"/>
</dbReference>
<dbReference type="InterPro" id="IPR050088">
    <property type="entry name" value="IspD/TarI_cytidylyltransf_bact"/>
</dbReference>
<dbReference type="InterPro" id="IPR018294">
    <property type="entry name" value="ISPD_synthase_CS"/>
</dbReference>
<dbReference type="InterPro" id="IPR029044">
    <property type="entry name" value="Nucleotide-diphossugar_trans"/>
</dbReference>
<dbReference type="NCBIfam" id="TIGR00453">
    <property type="entry name" value="ispD"/>
    <property type="match status" value="1"/>
</dbReference>
<dbReference type="PANTHER" id="PTHR32125">
    <property type="entry name" value="2-C-METHYL-D-ERYTHRITOL 4-PHOSPHATE CYTIDYLYLTRANSFERASE, CHLOROPLASTIC"/>
    <property type="match status" value="1"/>
</dbReference>
<dbReference type="PANTHER" id="PTHR32125:SF4">
    <property type="entry name" value="2-C-METHYL-D-ERYTHRITOL 4-PHOSPHATE CYTIDYLYLTRANSFERASE, CHLOROPLASTIC"/>
    <property type="match status" value="1"/>
</dbReference>
<dbReference type="Pfam" id="PF01128">
    <property type="entry name" value="IspD"/>
    <property type="match status" value="1"/>
</dbReference>
<dbReference type="SUPFAM" id="SSF53448">
    <property type="entry name" value="Nucleotide-diphospho-sugar transferases"/>
    <property type="match status" value="1"/>
</dbReference>
<dbReference type="PROSITE" id="PS01295">
    <property type="entry name" value="ISPD"/>
    <property type="match status" value="1"/>
</dbReference>
<name>ISPD_SHIDS</name>